<reference key="1">
    <citation type="journal article" date="1998" name="J. Biol. Chem.">
        <title>Molecular cloning and expression of glucuronyltransferase I involved in the biosynthesis of the glycosaminoglycan-protein linkage region of proteoglycans.</title>
        <authorList>
            <person name="Kitagawa H."/>
            <person name="Tone Y."/>
            <person name="Tamura J."/>
            <person name="Neumann K.W."/>
            <person name="Ogawa T."/>
            <person name="Oka S."/>
            <person name="Kawasaki T."/>
            <person name="Sugahara K."/>
        </authorList>
    </citation>
    <scope>NUCLEOTIDE SEQUENCE [MRNA] (ISOFORM 1)</scope>
    <scope>CHARACTERIZATION</scope>
    <source>
        <tissue>Placenta</tissue>
    </source>
</reference>
<reference key="2">
    <citation type="journal article" date="2000" name="J. Biol. Chem.">
        <title>Structure/function of the human Ga1beta1,3-glucuronosyltransferase. Dimerization and functional activity are mediated by two crucial cysteine residues.</title>
        <authorList>
            <person name="Ouzzine M."/>
            <person name="Gulberti S."/>
            <person name="Netter P."/>
            <person name="Magdalou J."/>
            <person name="Fournel-Gigleux S."/>
        </authorList>
    </citation>
    <scope>NUCLEOTIDE SEQUENCE [MRNA] (ISOFORM 1)</scope>
    <scope>CHARACTERIZATION</scope>
    <scope>MUTAGENESIS</scope>
</reference>
<reference key="3">
    <citation type="journal article" date="2004" name="Nat. Genet.">
        <title>Complete sequencing and characterization of 21,243 full-length human cDNAs.</title>
        <authorList>
            <person name="Ota T."/>
            <person name="Suzuki Y."/>
            <person name="Nishikawa T."/>
            <person name="Otsuki T."/>
            <person name="Sugiyama T."/>
            <person name="Irie R."/>
            <person name="Wakamatsu A."/>
            <person name="Hayashi K."/>
            <person name="Sato H."/>
            <person name="Nagai K."/>
            <person name="Kimura K."/>
            <person name="Makita H."/>
            <person name="Sekine M."/>
            <person name="Obayashi M."/>
            <person name="Nishi T."/>
            <person name="Shibahara T."/>
            <person name="Tanaka T."/>
            <person name="Ishii S."/>
            <person name="Yamamoto J."/>
            <person name="Saito K."/>
            <person name="Kawai Y."/>
            <person name="Isono Y."/>
            <person name="Nakamura Y."/>
            <person name="Nagahari K."/>
            <person name="Murakami K."/>
            <person name="Yasuda T."/>
            <person name="Iwayanagi T."/>
            <person name="Wagatsuma M."/>
            <person name="Shiratori A."/>
            <person name="Sudo H."/>
            <person name="Hosoiri T."/>
            <person name="Kaku Y."/>
            <person name="Kodaira H."/>
            <person name="Kondo H."/>
            <person name="Sugawara M."/>
            <person name="Takahashi M."/>
            <person name="Kanda K."/>
            <person name="Yokoi T."/>
            <person name="Furuya T."/>
            <person name="Kikkawa E."/>
            <person name="Omura Y."/>
            <person name="Abe K."/>
            <person name="Kamihara K."/>
            <person name="Katsuta N."/>
            <person name="Sato K."/>
            <person name="Tanikawa M."/>
            <person name="Yamazaki M."/>
            <person name="Ninomiya K."/>
            <person name="Ishibashi T."/>
            <person name="Yamashita H."/>
            <person name="Murakawa K."/>
            <person name="Fujimori K."/>
            <person name="Tanai H."/>
            <person name="Kimata M."/>
            <person name="Watanabe M."/>
            <person name="Hiraoka S."/>
            <person name="Chiba Y."/>
            <person name="Ishida S."/>
            <person name="Ono Y."/>
            <person name="Takiguchi S."/>
            <person name="Watanabe S."/>
            <person name="Yosida M."/>
            <person name="Hotuta T."/>
            <person name="Kusano J."/>
            <person name="Kanehori K."/>
            <person name="Takahashi-Fujii A."/>
            <person name="Hara H."/>
            <person name="Tanase T.-O."/>
            <person name="Nomura Y."/>
            <person name="Togiya S."/>
            <person name="Komai F."/>
            <person name="Hara R."/>
            <person name="Takeuchi K."/>
            <person name="Arita M."/>
            <person name="Imose N."/>
            <person name="Musashino K."/>
            <person name="Yuuki H."/>
            <person name="Oshima A."/>
            <person name="Sasaki N."/>
            <person name="Aotsuka S."/>
            <person name="Yoshikawa Y."/>
            <person name="Matsunawa H."/>
            <person name="Ichihara T."/>
            <person name="Shiohata N."/>
            <person name="Sano S."/>
            <person name="Moriya S."/>
            <person name="Momiyama H."/>
            <person name="Satoh N."/>
            <person name="Takami S."/>
            <person name="Terashima Y."/>
            <person name="Suzuki O."/>
            <person name="Nakagawa S."/>
            <person name="Senoh A."/>
            <person name="Mizoguchi H."/>
            <person name="Goto Y."/>
            <person name="Shimizu F."/>
            <person name="Wakebe H."/>
            <person name="Hishigaki H."/>
            <person name="Watanabe T."/>
            <person name="Sugiyama A."/>
            <person name="Takemoto M."/>
            <person name="Kawakami B."/>
            <person name="Yamazaki M."/>
            <person name="Watanabe K."/>
            <person name="Kumagai A."/>
            <person name="Itakura S."/>
            <person name="Fukuzumi Y."/>
            <person name="Fujimori Y."/>
            <person name="Komiyama M."/>
            <person name="Tashiro H."/>
            <person name="Tanigami A."/>
            <person name="Fujiwara T."/>
            <person name="Ono T."/>
            <person name="Yamada K."/>
            <person name="Fujii Y."/>
            <person name="Ozaki K."/>
            <person name="Hirao M."/>
            <person name="Ohmori Y."/>
            <person name="Kawabata A."/>
            <person name="Hikiji T."/>
            <person name="Kobatake N."/>
            <person name="Inagaki H."/>
            <person name="Ikema Y."/>
            <person name="Okamoto S."/>
            <person name="Okitani R."/>
            <person name="Kawakami T."/>
            <person name="Noguchi S."/>
            <person name="Itoh T."/>
            <person name="Shigeta K."/>
            <person name="Senba T."/>
            <person name="Matsumura K."/>
            <person name="Nakajima Y."/>
            <person name="Mizuno T."/>
            <person name="Morinaga M."/>
            <person name="Sasaki M."/>
            <person name="Togashi T."/>
            <person name="Oyama M."/>
            <person name="Hata H."/>
            <person name="Watanabe M."/>
            <person name="Komatsu T."/>
            <person name="Mizushima-Sugano J."/>
            <person name="Satoh T."/>
            <person name="Shirai Y."/>
            <person name="Takahashi Y."/>
            <person name="Nakagawa K."/>
            <person name="Okumura K."/>
            <person name="Nagase T."/>
            <person name="Nomura N."/>
            <person name="Kikuchi H."/>
            <person name="Masuho Y."/>
            <person name="Yamashita R."/>
            <person name="Nakai K."/>
            <person name="Yada T."/>
            <person name="Nakamura Y."/>
            <person name="Ohara O."/>
            <person name="Isogai T."/>
            <person name="Sugano S."/>
        </authorList>
    </citation>
    <scope>NUCLEOTIDE SEQUENCE [LARGE SCALE MRNA] (ISOFORM 2)</scope>
</reference>
<reference key="4">
    <citation type="journal article" date="2006" name="Nature">
        <title>Human chromosome 11 DNA sequence and analysis including novel gene identification.</title>
        <authorList>
            <person name="Taylor T.D."/>
            <person name="Noguchi H."/>
            <person name="Totoki Y."/>
            <person name="Toyoda A."/>
            <person name="Kuroki Y."/>
            <person name="Dewar K."/>
            <person name="Lloyd C."/>
            <person name="Itoh T."/>
            <person name="Takeda T."/>
            <person name="Kim D.-W."/>
            <person name="She X."/>
            <person name="Barlow K.F."/>
            <person name="Bloom T."/>
            <person name="Bruford E."/>
            <person name="Chang J.L."/>
            <person name="Cuomo C.A."/>
            <person name="Eichler E."/>
            <person name="FitzGerald M.G."/>
            <person name="Jaffe D.B."/>
            <person name="LaButti K."/>
            <person name="Nicol R."/>
            <person name="Park H.-S."/>
            <person name="Seaman C."/>
            <person name="Sougnez C."/>
            <person name="Yang X."/>
            <person name="Zimmer A.R."/>
            <person name="Zody M.C."/>
            <person name="Birren B.W."/>
            <person name="Nusbaum C."/>
            <person name="Fujiyama A."/>
            <person name="Hattori M."/>
            <person name="Rogers J."/>
            <person name="Lander E.S."/>
            <person name="Sakaki Y."/>
        </authorList>
    </citation>
    <scope>NUCLEOTIDE SEQUENCE [LARGE SCALE GENOMIC DNA]</scope>
</reference>
<reference key="5">
    <citation type="journal article" date="2004" name="Genome Res.">
        <title>The status, quality, and expansion of the NIH full-length cDNA project: the Mammalian Gene Collection (MGC).</title>
        <authorList>
            <consortium name="The MGC Project Team"/>
        </authorList>
    </citation>
    <scope>NUCLEOTIDE SEQUENCE [LARGE SCALE MRNA] (ISOFORM 1)</scope>
    <source>
        <tissue>Eye</tissue>
        <tissue>Skin</tissue>
    </source>
</reference>
<reference key="6">
    <citation type="journal article" date="1999" name="Proc. Natl. Acad. Sci. U.S.A.">
        <title>Three proteins involved in Caenorhabditis elegans vulval invagination are similar to components of a glycosylation pathway.</title>
        <authorList>
            <person name="Herman T."/>
            <person name="Horvitz H.R."/>
        </authorList>
    </citation>
    <scope>NUCLEOTIDE SEQUENCE [MRNA] OF 9-335 (ISOFORM 1)</scope>
    <source>
        <tissue>Brain</tissue>
    </source>
</reference>
<reference key="7">
    <citation type="journal article" date="1999" name="FEBS Lett.">
        <title>Characterization of recombinant human glucuronyltransferase I involved in the biosynthesis of the glycosaminoglycan-protein linkage region of proteoglycans.</title>
        <authorList>
            <person name="Tone Y."/>
            <person name="Kitagawa H."/>
            <person name="Imiya K."/>
            <person name="Oka S."/>
            <person name="Kawasaki T."/>
            <person name="Sugahara K."/>
        </authorList>
    </citation>
    <scope>CHARACTERIZATION</scope>
</reference>
<reference key="8">
    <citation type="journal article" date="2011" name="Am. J. Hum. Genet.">
        <title>Faulty initiation of proteoglycan synthesis causes cardiac and joint defects.</title>
        <authorList>
            <person name="Baasanjav S."/>
            <person name="Al-Gazali L."/>
            <person name="Hashiguchi T."/>
            <person name="Mizumoto S."/>
            <person name="Fischer B."/>
            <person name="Horn D."/>
            <person name="Seelow D."/>
            <person name="Ali B.R."/>
            <person name="Aziz S.A."/>
            <person name="Langer R."/>
            <person name="Saleh A.A."/>
            <person name="Becker C."/>
            <person name="Nurnberg G."/>
            <person name="Cantagrel V."/>
            <person name="Gleeson J.G."/>
            <person name="Gomez D."/>
            <person name="Michel J.B."/>
            <person name="Stricker S."/>
            <person name="Lindner T.H."/>
            <person name="Nurnberg P."/>
            <person name="Sugahara K."/>
            <person name="Mundlos S."/>
            <person name="Hoffmann K."/>
        </authorList>
    </citation>
    <scope>SUBCELLULAR LOCATION</scope>
    <scope>VARIANT JDSCD GLN-277</scope>
    <scope>CHARACTERIZATION OF VARIANT JDSCD GLN-277</scope>
    <scope>INVOLVEMENT IN JDSCD</scope>
</reference>
<reference key="9">
    <citation type="journal article" date="2011" name="BMC Syst. Biol.">
        <title>Initial characterization of the human central proteome.</title>
        <authorList>
            <person name="Burkard T.R."/>
            <person name="Planyavsky M."/>
            <person name="Kaupe I."/>
            <person name="Breitwieser F.P."/>
            <person name="Buerckstuemmer T."/>
            <person name="Bennett K.L."/>
            <person name="Superti-Furga G."/>
            <person name="Colinge J."/>
        </authorList>
    </citation>
    <scope>IDENTIFICATION BY MASS SPECTROMETRY [LARGE SCALE ANALYSIS]</scope>
</reference>
<reference key="10">
    <citation type="journal article" date="2014" name="J. Biol. Chem.">
        <title>Identification of phosphatase that dephosphorylates xylose in the glycosaminoglycan-protein linkage region of proteoglycans.</title>
        <authorList>
            <person name="Koike T."/>
            <person name="Izumikawa T."/>
            <person name="Sato B."/>
            <person name="Kitagawa H."/>
        </authorList>
    </citation>
    <scope>FUNCTION</scope>
    <scope>INTERACTION WITH PXYLP1</scope>
    <scope>MUTAGENESIS OF GLU-281</scope>
</reference>
<reference key="11">
    <citation type="journal article" date="2015" name="Proteomics">
        <title>N-terminome analysis of the human mitochondrial proteome.</title>
        <authorList>
            <person name="Vaca Jacome A.S."/>
            <person name="Rabilloud T."/>
            <person name="Schaeffer-Reiss C."/>
            <person name="Rompais M."/>
            <person name="Ayoub D."/>
            <person name="Lane L."/>
            <person name="Bairoch A."/>
            <person name="Van Dorsselaer A."/>
            <person name="Carapito C."/>
        </authorList>
    </citation>
    <scope>IDENTIFICATION BY MASS SPECTROMETRY [LARGE SCALE ANALYSIS]</scope>
</reference>
<reference key="12">
    <citation type="journal article" date="2000" name="J. Biol. Chem.">
        <title>Heparan/chondroitin sulfate biosynthesis. Structure and mechanism of human glucuronyltransferase I.</title>
        <authorList>
            <person name="Pedersen L.C."/>
            <person name="Tsuchida K."/>
            <person name="Kitagawa H."/>
            <person name="Sugahara K."/>
            <person name="Darden T.A."/>
            <person name="Negishi M."/>
        </authorList>
    </citation>
    <scope>X-RAY CRYSTALLOGRAPHY (2.30 ANGSTROMS) OF 76-335 IN COMPLEX WITH UDP-GLUCURONIC ACID AND GALACTOSE MOIETY OF SUBSTRATE GLYCOPROTEIN</scope>
    <source>
        <tissue>Liver</tissue>
    </source>
</reference>
<reference key="13">
    <citation type="journal article" date="2002" name="J. Biol. Chem.">
        <title>Crystal structure of beta 1,3-glucuronyltransferase I in complex with active donor substrate UDP-GlcUA.</title>
        <authorList>
            <person name="Pedersen L.C."/>
            <person name="Darden T.A."/>
            <person name="Negishi M."/>
        </authorList>
    </citation>
    <scope>X-RAY CRYSTALLOGRAPHY (2.10 ANGSTROMS) OF 76-335 IN COMPLEX WITH UDP-GLUCURONIC ACID</scope>
    <scope>ACTIVE SITE</scope>
</reference>
<reference key="14">
    <citation type="journal article" date="2008" name="J. Biol. Chem.">
        <title>2-o-phosphorylation of xylose and 6-O-sulfation of galactose in the protein linkage region of glycosaminoglycans influence the glucuronyltransferase-I activity involved in the linkage region synthesis.</title>
        <authorList>
            <person name="Tone Y."/>
            <person name="Pedersen L.C."/>
            <person name="Yamamoto T."/>
            <person name="Izumikawa T."/>
            <person name="Kitagawa H."/>
            <person name="Nishihara J."/>
            <person name="Tamura J."/>
            <person name="Negishi M."/>
            <person name="Sugahara K."/>
        </authorList>
    </citation>
    <scope>X-RAY CRYSTALLOGRAPHY (1.90 ANGSTROMS) OF 76-335 IN COMPLEX WITH URIDINE-5'-DIPHOSPHATE AND GALACTOSE MOIETY OF SUBSTRATE GLYCOPROTEIN</scope>
</reference>
<reference key="15">
    <citation type="journal article" date="2014" name="Am. J. Med. Genet. A">
        <title>Skeletal dysplasia, global developmental delay, and multiple congenital anomalies in a 5-year-old boy-report of the second family with B3GAT3 mutation and expansion of the phenotype.</title>
        <authorList>
            <person name="von Oettingen J.E."/>
            <person name="Tan W.H."/>
            <person name="Dauber A."/>
        </authorList>
    </citation>
    <scope>VARIANT JDSCD GLN-277</scope>
</reference>
<reference key="16">
    <citation type="journal article" date="2015" name="Am. J. Med. Genet. A">
        <title>A homozygous B3GAT3 mutation causes a severe syndrome with multiple fractures, expanding the phenotype of linkeropathy syndromes.</title>
        <authorList>
            <person name="Jones K.L."/>
            <person name="Schwarze U."/>
            <person name="Adam M.P."/>
            <person name="Byers P.H."/>
            <person name="Mefford H.C."/>
        </authorList>
    </citation>
    <scope>VARIANT JDSCD SER-223</scope>
</reference>
<reference key="17">
    <citation type="journal article" date="2015" name="Hum. Genet.">
        <title>Skeletal dysplasia in a consanguineous clan from the island of Nias/Indonesia is caused by a novel mutation in B3GAT3.</title>
        <authorList>
            <person name="Budde B.S."/>
            <person name="Mizumoto S."/>
            <person name="Kogawa R."/>
            <person name="Becker C."/>
            <person name="Altmueller J."/>
            <person name="Thiele H."/>
            <person name="Rueschendorf F."/>
            <person name="Toliat M.R."/>
            <person name="Kaleschke G."/>
            <person name="Haemmerle J.M."/>
            <person name="Hoehne W."/>
            <person name="Sugahara K."/>
            <person name="Nuernberg P."/>
            <person name="Kennerknecht I."/>
        </authorList>
    </citation>
    <scope>VARIANT JDSCD LEU-140</scope>
    <scope>CHARACTERIZATION OF VARIANT JDSCD LEU-140</scope>
    <scope>FUNCTION</scope>
    <scope>CATALYTIC ACTIVITY</scope>
    <scope>SUBCELLULAR LOCATION</scope>
</reference>
<dbReference type="EC" id="2.4.1.135" evidence="10"/>
<dbReference type="EMBL" id="AB009598">
    <property type="protein sequence ID" value="BAA34537.1"/>
    <property type="molecule type" value="mRNA"/>
</dbReference>
<dbReference type="EMBL" id="AK316228">
    <property type="protein sequence ID" value="BAH14599.1"/>
    <property type="molecule type" value="mRNA"/>
</dbReference>
<dbReference type="EMBL" id="AP001458">
    <property type="status" value="NOT_ANNOTATED_CDS"/>
    <property type="molecule type" value="Genomic_DNA"/>
</dbReference>
<dbReference type="EMBL" id="BC007906">
    <property type="protein sequence ID" value="AAH07906.1"/>
    <property type="molecule type" value="mRNA"/>
</dbReference>
<dbReference type="EMBL" id="BC071961">
    <property type="protein sequence ID" value="AAH71961.1"/>
    <property type="molecule type" value="mRNA"/>
</dbReference>
<dbReference type="EMBL" id="AJ005865">
    <property type="protein sequence ID" value="CAA06742.1"/>
    <property type="molecule type" value="mRNA"/>
</dbReference>
<dbReference type="CCDS" id="CCDS76418.1">
    <molecule id="O94766-2"/>
</dbReference>
<dbReference type="CCDS" id="CCDS8025.1">
    <molecule id="O94766-1"/>
</dbReference>
<dbReference type="RefSeq" id="NP_001275652.1">
    <molecule id="O94766-2"/>
    <property type="nucleotide sequence ID" value="NM_001288723.2"/>
</dbReference>
<dbReference type="RefSeq" id="NP_036332.2">
    <molecule id="O94766-1"/>
    <property type="nucleotide sequence ID" value="NM_012200.3"/>
</dbReference>
<dbReference type="PDB" id="1FGG">
    <property type="method" value="X-ray"/>
    <property type="resolution" value="2.30 A"/>
    <property type="chains" value="A/B=76-335"/>
</dbReference>
<dbReference type="PDB" id="1KWS">
    <property type="method" value="X-ray"/>
    <property type="resolution" value="2.10 A"/>
    <property type="chains" value="A/B=76-335"/>
</dbReference>
<dbReference type="PDB" id="3CU0">
    <property type="method" value="X-ray"/>
    <property type="resolution" value="1.90 A"/>
    <property type="chains" value="A/B=76-335"/>
</dbReference>
<dbReference type="PDBsum" id="1FGG"/>
<dbReference type="PDBsum" id="1KWS"/>
<dbReference type="PDBsum" id="3CU0"/>
<dbReference type="SMR" id="O94766"/>
<dbReference type="BioGRID" id="117620">
    <property type="interactions" value="142"/>
</dbReference>
<dbReference type="FunCoup" id="O94766">
    <property type="interactions" value="1603"/>
</dbReference>
<dbReference type="IntAct" id="O94766">
    <property type="interactions" value="90"/>
</dbReference>
<dbReference type="MINT" id="O94766"/>
<dbReference type="STRING" id="9606.ENSP00000265471"/>
<dbReference type="DrugBank" id="DB03041">
    <property type="generic name" value="UDP-alpha-D-glucuronic acid"/>
</dbReference>
<dbReference type="DrugBank" id="DB03435">
    <property type="generic name" value="Uridine-5'-Diphosphate"/>
</dbReference>
<dbReference type="CAZy" id="GT43">
    <property type="family name" value="Glycosyltransferase Family 43"/>
</dbReference>
<dbReference type="GlyCosmos" id="O94766">
    <property type="glycosylation" value="1 site, No reported glycans"/>
</dbReference>
<dbReference type="GlyGen" id="O94766">
    <property type="glycosylation" value="6 sites, 2 O-linked glycans (2 sites)"/>
</dbReference>
<dbReference type="iPTMnet" id="O94766"/>
<dbReference type="PhosphoSitePlus" id="O94766"/>
<dbReference type="SwissPalm" id="O94766"/>
<dbReference type="BioMuta" id="B3GAT3"/>
<dbReference type="jPOST" id="O94766"/>
<dbReference type="MassIVE" id="O94766"/>
<dbReference type="PaxDb" id="9606-ENSP00000265471"/>
<dbReference type="PeptideAtlas" id="O94766"/>
<dbReference type="ProteomicsDB" id="50431">
    <molecule id="O94766-1"/>
</dbReference>
<dbReference type="ProteomicsDB" id="7058"/>
<dbReference type="Pumba" id="O94766"/>
<dbReference type="Antibodypedia" id="28557">
    <property type="antibodies" value="135 antibodies from 19 providers"/>
</dbReference>
<dbReference type="DNASU" id="26229"/>
<dbReference type="Ensembl" id="ENST00000265471.10">
    <molecule id="O94766-1"/>
    <property type="protein sequence ID" value="ENSP00000265471.5"/>
    <property type="gene ID" value="ENSG00000149541.10"/>
</dbReference>
<dbReference type="Ensembl" id="ENST00000534026.5">
    <molecule id="O94766-2"/>
    <property type="protein sequence ID" value="ENSP00000432474.1"/>
    <property type="gene ID" value="ENSG00000149541.10"/>
</dbReference>
<dbReference type="GeneID" id="26229"/>
<dbReference type="KEGG" id="hsa:26229"/>
<dbReference type="MANE-Select" id="ENST00000265471.10">
    <property type="protein sequence ID" value="ENSP00000265471.5"/>
    <property type="RefSeq nucleotide sequence ID" value="NM_012200.4"/>
    <property type="RefSeq protein sequence ID" value="NP_036332.2"/>
</dbReference>
<dbReference type="UCSC" id="uc001ntw.3">
    <molecule id="O94766-1"/>
    <property type="organism name" value="human"/>
</dbReference>
<dbReference type="AGR" id="HGNC:923"/>
<dbReference type="CTD" id="26229"/>
<dbReference type="DisGeNET" id="26229"/>
<dbReference type="GeneCards" id="B3GAT3"/>
<dbReference type="HGNC" id="HGNC:923">
    <property type="gene designation" value="B3GAT3"/>
</dbReference>
<dbReference type="HPA" id="ENSG00000149541">
    <property type="expression patterns" value="Low tissue specificity"/>
</dbReference>
<dbReference type="MalaCards" id="B3GAT3"/>
<dbReference type="MIM" id="245600">
    <property type="type" value="phenotype"/>
</dbReference>
<dbReference type="MIM" id="606374">
    <property type="type" value="gene"/>
</dbReference>
<dbReference type="neXtProt" id="NX_O94766"/>
<dbReference type="OpenTargets" id="ENSG00000149541"/>
<dbReference type="Orphanet" id="284139">
    <property type="disease" value="Larsen-like syndrome, B3GAT3 type"/>
</dbReference>
<dbReference type="PharmGKB" id="PA25217"/>
<dbReference type="VEuPathDB" id="HostDB:ENSG00000149541"/>
<dbReference type="eggNOG" id="KOG1476">
    <property type="taxonomic scope" value="Eukaryota"/>
</dbReference>
<dbReference type="GeneTree" id="ENSGT00940000156954"/>
<dbReference type="HOGENOM" id="CLU_045177_0_1_1"/>
<dbReference type="InParanoid" id="O94766"/>
<dbReference type="OMA" id="IVRCFYT"/>
<dbReference type="OrthoDB" id="675023at2759"/>
<dbReference type="PAN-GO" id="O94766">
    <property type="GO annotations" value="4 GO annotations based on evolutionary models"/>
</dbReference>
<dbReference type="PhylomeDB" id="O94766"/>
<dbReference type="TreeFam" id="TF313522"/>
<dbReference type="BioCyc" id="MetaCyc:HS07624-MONOMER"/>
<dbReference type="BRENDA" id="2.4.1.135">
    <property type="organism ID" value="2681"/>
</dbReference>
<dbReference type="PathwayCommons" id="O94766"/>
<dbReference type="Reactome" id="R-HSA-1971475">
    <property type="pathway name" value="A tetrasaccharide linker sequence is required for GAG synthesis"/>
</dbReference>
<dbReference type="Reactome" id="R-HSA-3560801">
    <property type="pathway name" value="Defective B3GAT3 causes JDSSDHD"/>
</dbReference>
<dbReference type="SABIO-RK" id="O94766"/>
<dbReference type="SignaLink" id="O94766"/>
<dbReference type="UniPathway" id="UPA00378"/>
<dbReference type="BioGRID-ORCS" id="26229">
    <property type="hits" value="54 hits in 1156 CRISPR screens"/>
</dbReference>
<dbReference type="CD-CODE" id="FB4E32DD">
    <property type="entry name" value="Presynaptic clusters and postsynaptic densities"/>
</dbReference>
<dbReference type="ChiTaRS" id="B3GAT3">
    <property type="organism name" value="human"/>
</dbReference>
<dbReference type="EvolutionaryTrace" id="O94766"/>
<dbReference type="GeneWiki" id="B3GAT3"/>
<dbReference type="GenomeRNAi" id="26229"/>
<dbReference type="Pharos" id="O94766">
    <property type="development level" value="Tbio"/>
</dbReference>
<dbReference type="PRO" id="PR:O94766"/>
<dbReference type="Proteomes" id="UP000005640">
    <property type="component" value="Chromosome 11"/>
</dbReference>
<dbReference type="RNAct" id="O94766">
    <property type="molecule type" value="protein"/>
</dbReference>
<dbReference type="Bgee" id="ENSG00000149541">
    <property type="expression patterns" value="Expressed in right hemisphere of cerebellum and 139 other cell types or tissues"/>
</dbReference>
<dbReference type="ExpressionAtlas" id="O94766">
    <property type="expression patterns" value="baseline and differential"/>
</dbReference>
<dbReference type="GO" id="GO:0005801">
    <property type="term" value="C:cis-Golgi network"/>
    <property type="evidence" value="ECO:0000314"/>
    <property type="project" value="UniProtKB"/>
</dbReference>
<dbReference type="GO" id="GO:0070062">
    <property type="term" value="C:extracellular exosome"/>
    <property type="evidence" value="ECO:0007005"/>
    <property type="project" value="UniProtKB"/>
</dbReference>
<dbReference type="GO" id="GO:0005794">
    <property type="term" value="C:Golgi apparatus"/>
    <property type="evidence" value="ECO:0000314"/>
    <property type="project" value="MGI"/>
</dbReference>
<dbReference type="GO" id="GO:0000139">
    <property type="term" value="C:Golgi membrane"/>
    <property type="evidence" value="ECO:0000318"/>
    <property type="project" value="GO_Central"/>
</dbReference>
<dbReference type="GO" id="GO:0016020">
    <property type="term" value="C:membrane"/>
    <property type="evidence" value="ECO:0007005"/>
    <property type="project" value="UniProtKB"/>
</dbReference>
<dbReference type="GO" id="GO:0015018">
    <property type="term" value="F:galactosylgalactosylxylosylprotein 3-beta-glucuronosyltransferase activity"/>
    <property type="evidence" value="ECO:0000318"/>
    <property type="project" value="GO_Central"/>
</dbReference>
<dbReference type="GO" id="GO:0015020">
    <property type="term" value="F:glucuronosyltransferase activity"/>
    <property type="evidence" value="ECO:0000314"/>
    <property type="project" value="UniProtKB"/>
</dbReference>
<dbReference type="GO" id="GO:0046872">
    <property type="term" value="F:metal ion binding"/>
    <property type="evidence" value="ECO:0007669"/>
    <property type="project" value="UniProtKB-KW"/>
</dbReference>
<dbReference type="GO" id="GO:0072542">
    <property type="term" value="F:protein phosphatase activator activity"/>
    <property type="evidence" value="ECO:0000314"/>
    <property type="project" value="UniProtKB"/>
</dbReference>
<dbReference type="GO" id="GO:0005975">
    <property type="term" value="P:carbohydrate metabolic process"/>
    <property type="evidence" value="ECO:0000318"/>
    <property type="project" value="GO_Central"/>
</dbReference>
<dbReference type="GO" id="GO:0050650">
    <property type="term" value="P:chondroitin sulfate proteoglycan biosynthetic process"/>
    <property type="evidence" value="ECO:0000314"/>
    <property type="project" value="MGI"/>
</dbReference>
<dbReference type="GO" id="GO:0050651">
    <property type="term" value="P:dermatan sulfate proteoglycan biosynthetic process"/>
    <property type="evidence" value="ECO:0000314"/>
    <property type="project" value="MGI"/>
</dbReference>
<dbReference type="GO" id="GO:0006024">
    <property type="term" value="P:glycosaminoglycan biosynthetic process"/>
    <property type="evidence" value="ECO:0000314"/>
    <property type="project" value="UniProtKB"/>
</dbReference>
<dbReference type="GO" id="GO:0015012">
    <property type="term" value="P:heparan sulfate proteoglycan biosynthetic process"/>
    <property type="evidence" value="ECO:0000314"/>
    <property type="project" value="MGI"/>
</dbReference>
<dbReference type="GO" id="GO:0043085">
    <property type="term" value="P:positive regulation of catalytic activity"/>
    <property type="evidence" value="ECO:0000314"/>
    <property type="project" value="UniProtKB"/>
</dbReference>
<dbReference type="GO" id="GO:0090316">
    <property type="term" value="P:positive regulation of intracellular protein transport"/>
    <property type="evidence" value="ECO:0000315"/>
    <property type="project" value="UniProtKB"/>
</dbReference>
<dbReference type="GO" id="GO:0006486">
    <property type="term" value="P:protein glycosylation"/>
    <property type="evidence" value="ECO:0007669"/>
    <property type="project" value="UniProtKB-UniPathway"/>
</dbReference>
<dbReference type="CDD" id="cd00218">
    <property type="entry name" value="GlcAT-I"/>
    <property type="match status" value="1"/>
</dbReference>
<dbReference type="FunFam" id="3.90.550.10:FF:000044">
    <property type="entry name" value="Galactosylgalactosylxylosylprotein 3-beta-glucuronosyltransferase"/>
    <property type="match status" value="1"/>
</dbReference>
<dbReference type="Gene3D" id="3.90.550.10">
    <property type="entry name" value="Spore Coat Polysaccharide Biosynthesis Protein SpsA, Chain A"/>
    <property type="match status" value="1"/>
</dbReference>
<dbReference type="InterPro" id="IPR005027">
    <property type="entry name" value="Glyco_trans_43"/>
</dbReference>
<dbReference type="InterPro" id="IPR029044">
    <property type="entry name" value="Nucleotide-diphossugar_trans"/>
</dbReference>
<dbReference type="PANTHER" id="PTHR10896:SF65">
    <property type="entry name" value="GALACTOSYLGALACTOSYLXYLOSYLPROTEIN 3-BETA-GLUCURONOSYLTRANSFERASE 3"/>
    <property type="match status" value="1"/>
</dbReference>
<dbReference type="PANTHER" id="PTHR10896">
    <property type="entry name" value="GALACTOSYLGALACTOSYLXYLOSYLPROTEIN 3-BETA-GLUCURONOSYLTRANSFERASE BETA-1,3-GLUCURONYLTRANSFERASE"/>
    <property type="match status" value="1"/>
</dbReference>
<dbReference type="Pfam" id="PF03360">
    <property type="entry name" value="Glyco_transf_43"/>
    <property type="match status" value="1"/>
</dbReference>
<dbReference type="SUPFAM" id="SSF53448">
    <property type="entry name" value="Nucleotide-diphospho-sugar transferases"/>
    <property type="match status" value="1"/>
</dbReference>
<accession>O94766</accession>
<accession>B7ZAB3</accession>
<accession>Q96I06</accession>
<accession>Q9UEP0</accession>
<keyword id="KW-0002">3D-structure</keyword>
<keyword id="KW-0025">Alternative splicing</keyword>
<keyword id="KW-0225">Disease variant</keyword>
<keyword id="KW-1015">Disulfide bond</keyword>
<keyword id="KW-0325">Glycoprotein</keyword>
<keyword id="KW-0333">Golgi apparatus</keyword>
<keyword id="KW-0464">Manganese</keyword>
<keyword id="KW-0472">Membrane</keyword>
<keyword id="KW-0479">Metal-binding</keyword>
<keyword id="KW-1267">Proteomics identification</keyword>
<keyword id="KW-1185">Reference proteome</keyword>
<keyword id="KW-0735">Signal-anchor</keyword>
<keyword id="KW-0808">Transferase</keyword>
<keyword id="KW-0812">Transmembrane</keyword>
<keyword id="KW-1133">Transmembrane helix</keyword>
<evidence type="ECO:0000255" key="1"/>
<evidence type="ECO:0000256" key="2">
    <source>
        <dbReference type="SAM" id="MobiDB-lite"/>
    </source>
</evidence>
<evidence type="ECO:0000269" key="3">
    <source>
    </source>
</evidence>
<evidence type="ECO:0000269" key="4">
    <source>
    </source>
</evidence>
<evidence type="ECO:0000269" key="5">
    <source>
    </source>
</evidence>
<evidence type="ECO:0000269" key="6">
    <source>
    </source>
</evidence>
<evidence type="ECO:0000269" key="7">
    <source>
    </source>
</evidence>
<evidence type="ECO:0000269" key="8">
    <source>
    </source>
</evidence>
<evidence type="ECO:0000269" key="9">
    <source>
    </source>
</evidence>
<evidence type="ECO:0000269" key="10">
    <source>
    </source>
</evidence>
<evidence type="ECO:0000269" key="11">
    <source>
    </source>
</evidence>
<evidence type="ECO:0000303" key="12">
    <source>
    </source>
</evidence>
<evidence type="ECO:0000303" key="13">
    <source>
    </source>
</evidence>
<evidence type="ECO:0000305" key="14"/>
<evidence type="ECO:0007829" key="15">
    <source>
        <dbReference type="PDB" id="3CU0"/>
    </source>
</evidence>
<proteinExistence type="evidence at protein level"/>
<comment type="function">
    <text evidence="8 10">Glycosaminoglycans biosynthesis (PubMed:25893793). Involved in forming the linkage tetrasaccharide present in heparan sulfate and chondroitin sulfate. Transfers a glucuronic acid moiety from the uridine diphosphate-glucuronic acid (UDP-GlcUA) to the common linkage region trisaccharide Gal-beta-1,3-Gal-beta-1,4-Xyl covalently bound to a Ser residue at the glycosaminylglycan attachment site of proteoglycans. Can also play a role in the biosynthesis of l2/HNK-1 carbohydrate epitope on glycoproteins. Shows strict specificity for Gal-beta-1,3-Gal-beta-1,4-Xyl, exhibiting negligible incorporation into other galactoside substrates including Galbeta1-3Gal beta1-O-benzyl, Galbeta1-4GlcNAc and Galbeta1-4Glc. Stimulates 2-phosphoxylose phosphatase activity of PXYLP1 in presence of uridine diphosphate-glucuronic acid (UDP-GlcUA) during completion of linkage region formation (PubMed:24425863).</text>
</comment>
<comment type="catalytic activity">
    <reaction evidence="10">
        <text>3-O-(beta-D-galactosyl-(1-&gt;3)-beta-D-galactosyl-(1-&gt;4)-beta-D-xylosyl)-L-seryl-[protein] + UDP-alpha-D-glucuronate = 3-O-(beta-D-GlcA-(1-&gt;3)-beta-D-Gal-(1-&gt;3)-beta-D-Gal-(1-&gt;4)-beta-D-Xyl)-L-seryl-[protein] + UDP + H(+)</text>
        <dbReference type="Rhea" id="RHEA:24168"/>
        <dbReference type="Rhea" id="RHEA-COMP:12571"/>
        <dbReference type="Rhea" id="RHEA-COMP:12573"/>
        <dbReference type="ChEBI" id="CHEBI:15378"/>
        <dbReference type="ChEBI" id="CHEBI:58052"/>
        <dbReference type="ChEBI" id="CHEBI:58223"/>
        <dbReference type="ChEBI" id="CHEBI:132090"/>
        <dbReference type="ChEBI" id="CHEBI:132093"/>
        <dbReference type="EC" id="2.4.1.135"/>
    </reaction>
</comment>
<comment type="cofactor">
    <cofactor>
        <name>Mn(2+)</name>
        <dbReference type="ChEBI" id="CHEBI:29035"/>
    </cofactor>
</comment>
<comment type="activity regulation">
    <text>Inhibited by EDTA.</text>
</comment>
<comment type="pathway">
    <text>Protein modification; protein glycosylation.</text>
</comment>
<comment type="subunit">
    <text evidence="4 5 6 8">Homodimer; disulfide-linked. Interacts with PXYLP1; the interaction increases the 2-phosphoxylose phosphatase activity of PXYLP1 during completion of linkage region formation in a B3GAT3-mediated manner.</text>
</comment>
<comment type="interaction">
    <interactant intactId="EBI-3917958">
        <id>O94766</id>
    </interactant>
    <interactant intactId="EBI-11337900">
        <id>Q9H5K3</id>
        <label>POMK</label>
    </interactant>
    <organismsDiffer>false</organismsDiffer>
    <experiments>2</experiments>
</comment>
<comment type="subcellular location">
    <subcellularLocation>
        <location evidence="7">Golgi apparatus membrane</location>
        <topology evidence="7">Single-pass type II membrane protein</topology>
    </subcellularLocation>
    <subcellularLocation>
        <location evidence="7 10">Golgi apparatus</location>
        <location evidence="7 10">cis-Golgi network</location>
    </subcellularLocation>
</comment>
<comment type="alternative products">
    <event type="alternative splicing"/>
    <isoform>
        <id>O94766-1</id>
        <name>1</name>
        <sequence type="displayed"/>
    </isoform>
    <isoform>
        <id>O94766-2</id>
        <name>2</name>
        <sequence type="described" ref="VSP_056347"/>
    </isoform>
</comment>
<comment type="tissue specificity">
    <text>Ubiquitous (but weakly expressed in all tissues examined).</text>
</comment>
<comment type="PTM">
    <text>N-glycosylated.</text>
</comment>
<comment type="disease" evidence="7 9 10 11">
    <disease id="DI-03269">
        <name>Multiple joint dislocations, short stature, and craniofacial dysmorphism with or without congenital heart defects</name>
        <acronym>JDSCD</acronym>
        <description>An autosomal recessive disease characterized by dysmorphic facies, bilateral dislocations of the elbows, hips, and knees, clubfeet, and short stature, as well as cardiovascular defects.</description>
        <dbReference type="MIM" id="245600"/>
    </disease>
    <text>The disease is caused by variants affecting the gene represented in this entry.</text>
</comment>
<comment type="similarity">
    <text evidence="14">Belongs to the glycosyltransferase 43 family.</text>
</comment>
<protein>
    <recommendedName>
        <fullName>Galactosylgalactosylxylosylprotein 3-beta-glucuronosyltransferase 3</fullName>
        <ecNumber evidence="10">2.4.1.135</ecNumber>
    </recommendedName>
    <alternativeName>
        <fullName>Beta-1,3-glucuronyltransferase 3</fullName>
    </alternativeName>
    <alternativeName>
        <fullName>Glucuronosyltransferase I</fullName>
        <shortName>GlcAT-I</shortName>
    </alternativeName>
    <alternativeName>
        <fullName>UDP-GlcUA:Gal beta-1,3-Gal-R glucuronyltransferase</fullName>
        <shortName>GlcUAT-I</shortName>
    </alternativeName>
</protein>
<name>B3GA3_HUMAN</name>
<feature type="chain" id="PRO_0000195176" description="Galactosylgalactosylxylosylprotein 3-beta-glucuronosyltransferase 3">
    <location>
        <begin position="1"/>
        <end position="335"/>
    </location>
</feature>
<feature type="topological domain" description="Cytoplasmic" evidence="1">
    <location>
        <begin position="1"/>
        <end position="7"/>
    </location>
</feature>
<feature type="transmembrane region" description="Helical; Signal-anchor for type II membrane protein" evidence="1">
    <location>
        <begin position="8"/>
        <end position="28"/>
    </location>
</feature>
<feature type="topological domain" description="Lumenal" evidence="1">
    <location>
        <begin position="29"/>
        <end position="335"/>
    </location>
</feature>
<feature type="region of interest" description="Interaction with galactose moiety of substrate glycoprotein">
    <location>
        <begin position="243"/>
        <end position="252"/>
    </location>
</feature>
<feature type="region of interest" description="Disordered" evidence="2">
    <location>
        <begin position="312"/>
        <end position="335"/>
    </location>
</feature>
<feature type="compositionally biased region" description="Basic and acidic residues" evidence="2">
    <location>
        <begin position="312"/>
        <end position="322"/>
    </location>
</feature>
<feature type="active site" description="Proton donor/acceptor" evidence="5">
    <location>
        <position position="281"/>
    </location>
</feature>
<feature type="binding site">
    <location>
        <begin position="82"/>
        <end position="84"/>
    </location>
    <ligand>
        <name>UDP-alpha-D-glucuronate</name>
        <dbReference type="ChEBI" id="CHEBI:58052"/>
    </ligand>
</feature>
<feature type="binding site">
    <location>
        <position position="113"/>
    </location>
    <ligand>
        <name>UDP-alpha-D-glucuronate</name>
        <dbReference type="ChEBI" id="CHEBI:58052"/>
    </ligand>
</feature>
<feature type="binding site">
    <location>
        <position position="156"/>
    </location>
    <ligand>
        <name>UDP-alpha-D-glucuronate</name>
        <dbReference type="ChEBI" id="CHEBI:58052"/>
    </ligand>
</feature>
<feature type="binding site">
    <location>
        <position position="161"/>
    </location>
    <ligand>
        <name>UDP-alpha-D-glucuronate</name>
        <dbReference type="ChEBI" id="CHEBI:58052"/>
    </ligand>
</feature>
<feature type="binding site">
    <location>
        <begin position="194"/>
        <end position="196"/>
    </location>
    <ligand>
        <name>UDP-alpha-D-glucuronate</name>
        <dbReference type="ChEBI" id="CHEBI:58052"/>
    </ligand>
</feature>
<feature type="binding site">
    <location>
        <position position="196"/>
    </location>
    <ligand>
        <name>Mn(2+)</name>
        <dbReference type="ChEBI" id="CHEBI:29035"/>
    </ligand>
</feature>
<feature type="binding site">
    <location>
        <begin position="308"/>
        <end position="310"/>
    </location>
    <ligand>
        <name>UDP-alpha-D-glucuronate</name>
        <dbReference type="ChEBI" id="CHEBI:58052"/>
    </ligand>
</feature>
<feature type="site" description="Interaction with galactose moiety of substrate glycoprotein">
    <location>
        <position position="227"/>
    </location>
</feature>
<feature type="site" description="Interaction with galactose moiety of substrate glycoprotein">
    <location>
        <position position="318"/>
    </location>
</feature>
<feature type="glycosylation site" description="N-linked (GlcNAc...) asparagine">
    <location>
        <position position="300"/>
    </location>
</feature>
<feature type="disulfide bond" description="Interchain">
    <location>
        <position position="33"/>
    </location>
</feature>
<feature type="splice variant" id="VSP_056347" description="In isoform 2." evidence="12">
    <original>VLVWHTRTEKPKMKQEEQLQRQGRGSDPAIEV</original>
    <variation>TESRCVTQAGVQ</variation>
    <location>
        <begin position="304"/>
        <end position="335"/>
    </location>
</feature>
<feature type="sequence variant" id="VAR_075370" description="In JDSCD; reduced glucuronyltransferase activity; patient fibroblasts have decreased levels of dermatan sulfate, chondroitin sulfate and heparan sulfate proteoglycans; dbSNP:rs879255269." evidence="10">
    <original>P</original>
    <variation>L</variation>
    <location>
        <position position="140"/>
    </location>
</feature>
<feature type="sequence variant" id="VAR_075371" description="In JDSCD; uncertain significance; dbSNP:rs372487178." evidence="11">
    <original>G</original>
    <variation>S</variation>
    <location>
        <position position="223"/>
    </location>
</feature>
<feature type="sequence variant" id="VAR_066624" description="In JDSCD; reduced glucuronyltransferase activity; patient fibroblasts have decreased levels of dermatan sulfate, chondroitin sulfate and heparan sulfate proteoglycans; dbSNP:rs387906937." evidence="7 9">
    <original>R</original>
    <variation>Q</variation>
    <location>
        <position position="277"/>
    </location>
</feature>
<feature type="mutagenesis site" description="Loss of dimer formation and reduced activity." evidence="3">
    <original>C</original>
    <variation>A</variation>
    <location>
        <position position="33"/>
    </location>
</feature>
<feature type="mutagenesis site" description="Absence of enzymatic activity in presence of uridine diphosphate-glucuronic acid (UDP-GlcUA). Does not increase PXYLP1-induced 2-phosphoxylose phosphatase activity in presence of uridine diphosphate-glucuronic acid (UDP-GlcUA)." evidence="8 13">
    <original>E</original>
    <variation>A</variation>
    <location>
        <position position="281"/>
    </location>
</feature>
<feature type="mutagenesis site" description="Enzyme inactivation and loss of glycosylation." evidence="3">
    <original>C</original>
    <variation>A</variation>
    <location>
        <position position="301"/>
    </location>
</feature>
<feature type="sequence conflict" description="In Ref. 1; BAA34537." evidence="14" ref="1">
    <original>F</original>
    <variation>S</variation>
    <location>
        <position position="204"/>
    </location>
</feature>
<feature type="strand" evidence="15">
    <location>
        <begin position="76"/>
        <end position="83"/>
    </location>
</feature>
<feature type="helix" evidence="15">
    <location>
        <begin position="89"/>
        <end position="100"/>
    </location>
</feature>
<feature type="strand" evidence="15">
    <location>
        <begin position="103"/>
        <end position="116"/>
    </location>
</feature>
<feature type="helix" evidence="15">
    <location>
        <begin position="119"/>
        <end position="128"/>
    </location>
</feature>
<feature type="strand" evidence="15">
    <location>
        <begin position="130"/>
        <end position="136"/>
    </location>
</feature>
<feature type="helix" evidence="15">
    <location>
        <begin position="158"/>
        <end position="168"/>
    </location>
</feature>
<feature type="strand" evidence="15">
    <location>
        <begin position="174"/>
        <end position="177"/>
    </location>
</feature>
<feature type="strand" evidence="15">
    <location>
        <begin position="188"/>
        <end position="192"/>
    </location>
</feature>
<feature type="strand" evidence="15">
    <location>
        <begin position="197"/>
        <end position="199"/>
    </location>
</feature>
<feature type="helix" evidence="15">
    <location>
        <begin position="201"/>
        <end position="207"/>
    </location>
</feature>
<feature type="strand" evidence="15">
    <location>
        <begin position="211"/>
        <end position="215"/>
    </location>
</feature>
<feature type="strand" evidence="15">
    <location>
        <begin position="218"/>
        <end position="221"/>
    </location>
</feature>
<feature type="strand" evidence="15">
    <location>
        <begin position="224"/>
        <end position="232"/>
    </location>
</feature>
<feature type="strand" evidence="15">
    <location>
        <begin position="235"/>
        <end position="240"/>
    </location>
</feature>
<feature type="helix" evidence="15">
    <location>
        <begin position="253"/>
        <end position="255"/>
    </location>
</feature>
<feature type="strand" evidence="15">
    <location>
        <begin position="256"/>
        <end position="259"/>
    </location>
</feature>
<feature type="helix" evidence="15">
    <location>
        <begin position="260"/>
        <end position="265"/>
    </location>
</feature>
<feature type="helix" evidence="15">
    <location>
        <begin position="280"/>
        <end position="285"/>
    </location>
</feature>
<feature type="turn" evidence="15">
    <location>
        <begin position="286"/>
        <end position="288"/>
    </location>
</feature>
<feature type="helix" evidence="15">
    <location>
        <begin position="291"/>
        <end position="293"/>
    </location>
</feature>
<feature type="helix" evidence="15">
    <location>
        <begin position="298"/>
        <end position="301"/>
    </location>
</feature>
<feature type="helix" evidence="15">
    <location>
        <begin position="317"/>
        <end position="323"/>
    </location>
</feature>
<feature type="turn" evidence="15">
    <location>
        <begin position="324"/>
        <end position="326"/>
    </location>
</feature>
<sequence>MKLKLKNVFLAYFLVSIAGLLYALVQLGQPCDCLPPLRAAAEQLRQKDLRISQLQAELRRPPPAPAQPPEPEALPTIYVVTPTYARLVQKAELVRLSQTLSLVPRLHWLLVEDAEGPTPLVSGLLAASGLLFTHLVVLTPKAQRLREGEPGWVHPRGVEQRNKALDWLRGRGGAVGGEKDPPPPGTQGVVYFADDDNTYSRELFEEMRWTRGVSVWPVGLVGGLRFEGPQVQDGRVVGFHTAWEPSRPFPVDMAGFAVALPLLLDKPNAQFDSTAPRGHLESSLLSHLVDPKDLEPRAANCTRVLVWHTRTEKPKMKQEEQLQRQGRGSDPAIEV</sequence>
<gene>
    <name type="primary">B3GAT3</name>
</gene>
<organism>
    <name type="scientific">Homo sapiens</name>
    <name type="common">Human</name>
    <dbReference type="NCBI Taxonomy" id="9606"/>
    <lineage>
        <taxon>Eukaryota</taxon>
        <taxon>Metazoa</taxon>
        <taxon>Chordata</taxon>
        <taxon>Craniata</taxon>
        <taxon>Vertebrata</taxon>
        <taxon>Euteleostomi</taxon>
        <taxon>Mammalia</taxon>
        <taxon>Eutheria</taxon>
        <taxon>Euarchontoglires</taxon>
        <taxon>Primates</taxon>
        <taxon>Haplorrhini</taxon>
        <taxon>Catarrhini</taxon>
        <taxon>Hominidae</taxon>
        <taxon>Homo</taxon>
    </lineage>
</organism>